<name>RUVB_STRA5</name>
<sequence length="332" mass="37558">MTRFLDSDAMGDEELVERTLRPQYLREYIGQDKVKDQLKIFIEAAKLRDESLDHVLLFGPPGLGKTTMAFVIANELGVNLKQTSGPAIEKSGDLVAILNDLEPGDVLFIDEIHRMPMAVEEVLYSAMEDFYIDIMIGAGETSRSVHLDLPPFTLIGATTRAGMLSNPLRARFGITGHMEYYEENDLTEIIERTADIFEMKITYEAASELARRSRGTPRIANRLLKRVRDYAQIMGDGLIDDNITDKALTMLDVDHEGLDYVDQKILRTMIEMYNGGPVGLGTLSVNIAEERDTVEDMYEPYLIQKGFIMRTRTGRVATVKAYEHLGYQRFDK</sequence>
<organism>
    <name type="scientific">Streptococcus agalactiae serotype V (strain ATCC BAA-611 / 2603 V/R)</name>
    <dbReference type="NCBI Taxonomy" id="208435"/>
    <lineage>
        <taxon>Bacteria</taxon>
        <taxon>Bacillati</taxon>
        <taxon>Bacillota</taxon>
        <taxon>Bacilli</taxon>
        <taxon>Lactobacillales</taxon>
        <taxon>Streptococcaceae</taxon>
        <taxon>Streptococcus</taxon>
    </lineage>
</organism>
<keyword id="KW-0067">ATP-binding</keyword>
<keyword id="KW-0963">Cytoplasm</keyword>
<keyword id="KW-0227">DNA damage</keyword>
<keyword id="KW-0233">DNA recombination</keyword>
<keyword id="KW-0234">DNA repair</keyword>
<keyword id="KW-0238">DNA-binding</keyword>
<keyword id="KW-0378">Hydrolase</keyword>
<keyword id="KW-0547">Nucleotide-binding</keyword>
<keyword id="KW-1185">Reference proteome</keyword>
<protein>
    <recommendedName>
        <fullName evidence="1">Holliday junction branch migration complex subunit RuvB</fullName>
        <ecNumber evidence="1">3.6.4.-</ecNumber>
    </recommendedName>
</protein>
<evidence type="ECO:0000255" key="1">
    <source>
        <dbReference type="HAMAP-Rule" id="MF_00016"/>
    </source>
</evidence>
<proteinExistence type="inferred from homology"/>
<accession>Q8E2D9</accession>
<comment type="function">
    <text evidence="1">The RuvA-RuvB-RuvC complex processes Holliday junction (HJ) DNA during genetic recombination and DNA repair, while the RuvA-RuvB complex plays an important role in the rescue of blocked DNA replication forks via replication fork reversal (RFR). RuvA specifically binds to HJ cruciform DNA, conferring on it an open structure. The RuvB hexamer acts as an ATP-dependent pump, pulling dsDNA into and through the RuvAB complex. RuvB forms 2 homohexamers on either side of HJ DNA bound by 1 or 2 RuvA tetramers; 4 subunits per hexamer contact DNA at a time. Coordinated motions by a converter formed by DNA-disengaged RuvB subunits stimulates ATP hydrolysis and nucleotide exchange. Immobilization of the converter enables RuvB to convert the ATP-contained energy into a lever motion, pulling 2 nucleotides of DNA out of the RuvA tetramer per ATP hydrolyzed, thus driving DNA branch migration. The RuvB motors rotate together with the DNA substrate, which together with the progressing nucleotide cycle form the mechanistic basis for DNA recombination by continuous HJ branch migration. Branch migration allows RuvC to scan DNA until it finds its consensus sequence, where it cleaves and resolves cruciform DNA.</text>
</comment>
<comment type="catalytic activity">
    <reaction evidence="1">
        <text>ATP + H2O = ADP + phosphate + H(+)</text>
        <dbReference type="Rhea" id="RHEA:13065"/>
        <dbReference type="ChEBI" id="CHEBI:15377"/>
        <dbReference type="ChEBI" id="CHEBI:15378"/>
        <dbReference type="ChEBI" id="CHEBI:30616"/>
        <dbReference type="ChEBI" id="CHEBI:43474"/>
        <dbReference type="ChEBI" id="CHEBI:456216"/>
    </reaction>
</comment>
<comment type="subunit">
    <text evidence="1">Homohexamer. Forms an RuvA(8)-RuvB(12)-Holliday junction (HJ) complex. HJ DNA is sandwiched between 2 RuvA tetramers; dsDNA enters through RuvA and exits via RuvB. An RuvB hexamer assembles on each DNA strand where it exits the tetramer. Each RuvB hexamer is contacted by two RuvA subunits (via domain III) on 2 adjacent RuvB subunits; this complex drives branch migration. In the full resolvosome a probable DNA-RuvA(4)-RuvB(12)-RuvC(2) complex forms which resolves the HJ.</text>
</comment>
<comment type="subcellular location">
    <subcellularLocation>
        <location evidence="1">Cytoplasm</location>
    </subcellularLocation>
</comment>
<comment type="domain">
    <text evidence="1">Has 3 domains, the large (RuvB-L) and small ATPase (RuvB-S) domains and the C-terminal head (RuvB-H) domain. The head domain binds DNA, while the ATPase domains jointly bind ATP, ADP or are empty depending on the state of the subunit in the translocation cycle. During a single DNA translocation step the structure of each domain remains the same, but their relative positions change.</text>
</comment>
<comment type="similarity">
    <text evidence="1">Belongs to the RuvB family.</text>
</comment>
<gene>
    <name evidence="1" type="primary">ruvB</name>
    <name type="ordered locus">SAG0049</name>
</gene>
<reference key="1">
    <citation type="journal article" date="2002" name="Proc. Natl. Acad. Sci. U.S.A.">
        <title>Complete genome sequence and comparative genomic analysis of an emerging human pathogen, serotype V Streptococcus agalactiae.</title>
        <authorList>
            <person name="Tettelin H."/>
            <person name="Masignani V."/>
            <person name="Cieslewicz M.J."/>
            <person name="Eisen J.A."/>
            <person name="Peterson S.N."/>
            <person name="Wessels M.R."/>
            <person name="Paulsen I.T."/>
            <person name="Nelson K.E."/>
            <person name="Margarit I."/>
            <person name="Read T.D."/>
            <person name="Madoff L.C."/>
            <person name="Wolf A.M."/>
            <person name="Beanan M.J."/>
            <person name="Brinkac L.M."/>
            <person name="Daugherty S.C."/>
            <person name="DeBoy R.T."/>
            <person name="Durkin A.S."/>
            <person name="Kolonay J.F."/>
            <person name="Madupu R."/>
            <person name="Lewis M.R."/>
            <person name="Radune D."/>
            <person name="Fedorova N.B."/>
            <person name="Scanlan D."/>
            <person name="Khouri H.M."/>
            <person name="Mulligan S."/>
            <person name="Carty H.A."/>
            <person name="Cline R.T."/>
            <person name="Van Aken S.E."/>
            <person name="Gill J."/>
            <person name="Scarselli M."/>
            <person name="Mora M."/>
            <person name="Iacobini E.T."/>
            <person name="Brettoni C."/>
            <person name="Galli G."/>
            <person name="Mariani M."/>
            <person name="Vegni F."/>
            <person name="Maione D."/>
            <person name="Rinaudo D."/>
            <person name="Rappuoli R."/>
            <person name="Telford J.L."/>
            <person name="Kasper D.L."/>
            <person name="Grandi G."/>
            <person name="Fraser C.M."/>
        </authorList>
    </citation>
    <scope>NUCLEOTIDE SEQUENCE [LARGE SCALE GENOMIC DNA]</scope>
    <source>
        <strain>ATCC BAA-611 / 2603 V/R</strain>
    </source>
</reference>
<dbReference type="EC" id="3.6.4.-" evidence="1"/>
<dbReference type="EMBL" id="AE009948">
    <property type="protein sequence ID" value="AAM98957.1"/>
    <property type="molecule type" value="Genomic_DNA"/>
</dbReference>
<dbReference type="RefSeq" id="NP_687085.1">
    <property type="nucleotide sequence ID" value="NC_004116.1"/>
</dbReference>
<dbReference type="RefSeq" id="WP_000196634.1">
    <property type="nucleotide sequence ID" value="NC_004116.1"/>
</dbReference>
<dbReference type="SMR" id="Q8E2D9"/>
<dbReference type="STRING" id="208435.SAG0049"/>
<dbReference type="KEGG" id="sag:SAG0049"/>
<dbReference type="PATRIC" id="fig|208435.3.peg.48"/>
<dbReference type="HOGENOM" id="CLU_055599_1_0_9"/>
<dbReference type="OrthoDB" id="9804478at2"/>
<dbReference type="Proteomes" id="UP000000821">
    <property type="component" value="Chromosome"/>
</dbReference>
<dbReference type="GO" id="GO:0005737">
    <property type="term" value="C:cytoplasm"/>
    <property type="evidence" value="ECO:0007669"/>
    <property type="project" value="UniProtKB-SubCell"/>
</dbReference>
<dbReference type="GO" id="GO:0048476">
    <property type="term" value="C:Holliday junction resolvase complex"/>
    <property type="evidence" value="ECO:0007669"/>
    <property type="project" value="UniProtKB-UniRule"/>
</dbReference>
<dbReference type="GO" id="GO:0005524">
    <property type="term" value="F:ATP binding"/>
    <property type="evidence" value="ECO:0007669"/>
    <property type="project" value="UniProtKB-UniRule"/>
</dbReference>
<dbReference type="GO" id="GO:0016887">
    <property type="term" value="F:ATP hydrolysis activity"/>
    <property type="evidence" value="ECO:0007669"/>
    <property type="project" value="InterPro"/>
</dbReference>
<dbReference type="GO" id="GO:0000400">
    <property type="term" value="F:four-way junction DNA binding"/>
    <property type="evidence" value="ECO:0007669"/>
    <property type="project" value="UniProtKB-UniRule"/>
</dbReference>
<dbReference type="GO" id="GO:0009378">
    <property type="term" value="F:four-way junction helicase activity"/>
    <property type="evidence" value="ECO:0007669"/>
    <property type="project" value="InterPro"/>
</dbReference>
<dbReference type="GO" id="GO:0006310">
    <property type="term" value="P:DNA recombination"/>
    <property type="evidence" value="ECO:0007669"/>
    <property type="project" value="UniProtKB-UniRule"/>
</dbReference>
<dbReference type="GO" id="GO:0006281">
    <property type="term" value="P:DNA repair"/>
    <property type="evidence" value="ECO:0007669"/>
    <property type="project" value="UniProtKB-UniRule"/>
</dbReference>
<dbReference type="CDD" id="cd00009">
    <property type="entry name" value="AAA"/>
    <property type="match status" value="1"/>
</dbReference>
<dbReference type="Gene3D" id="1.10.8.60">
    <property type="match status" value="1"/>
</dbReference>
<dbReference type="Gene3D" id="3.40.50.300">
    <property type="entry name" value="P-loop containing nucleotide triphosphate hydrolases"/>
    <property type="match status" value="1"/>
</dbReference>
<dbReference type="Gene3D" id="1.10.10.10">
    <property type="entry name" value="Winged helix-like DNA-binding domain superfamily/Winged helix DNA-binding domain"/>
    <property type="match status" value="1"/>
</dbReference>
<dbReference type="HAMAP" id="MF_00016">
    <property type="entry name" value="DNA_HJ_migration_RuvB"/>
    <property type="match status" value="1"/>
</dbReference>
<dbReference type="InterPro" id="IPR003593">
    <property type="entry name" value="AAA+_ATPase"/>
</dbReference>
<dbReference type="InterPro" id="IPR041445">
    <property type="entry name" value="AAA_lid_4"/>
</dbReference>
<dbReference type="InterPro" id="IPR004605">
    <property type="entry name" value="DNA_helicase_Holl-junc_RuvB"/>
</dbReference>
<dbReference type="InterPro" id="IPR027417">
    <property type="entry name" value="P-loop_NTPase"/>
</dbReference>
<dbReference type="InterPro" id="IPR008824">
    <property type="entry name" value="RuvB-like_N"/>
</dbReference>
<dbReference type="InterPro" id="IPR008823">
    <property type="entry name" value="RuvB_C"/>
</dbReference>
<dbReference type="InterPro" id="IPR036388">
    <property type="entry name" value="WH-like_DNA-bd_sf"/>
</dbReference>
<dbReference type="InterPro" id="IPR036390">
    <property type="entry name" value="WH_DNA-bd_sf"/>
</dbReference>
<dbReference type="NCBIfam" id="NF000868">
    <property type="entry name" value="PRK00080.1"/>
    <property type="match status" value="1"/>
</dbReference>
<dbReference type="NCBIfam" id="TIGR00635">
    <property type="entry name" value="ruvB"/>
    <property type="match status" value="1"/>
</dbReference>
<dbReference type="PANTHER" id="PTHR42848">
    <property type="match status" value="1"/>
</dbReference>
<dbReference type="PANTHER" id="PTHR42848:SF1">
    <property type="entry name" value="HOLLIDAY JUNCTION BRANCH MIGRATION COMPLEX SUBUNIT RUVB"/>
    <property type="match status" value="1"/>
</dbReference>
<dbReference type="Pfam" id="PF17864">
    <property type="entry name" value="AAA_lid_4"/>
    <property type="match status" value="1"/>
</dbReference>
<dbReference type="Pfam" id="PF05491">
    <property type="entry name" value="RuvB_C"/>
    <property type="match status" value="1"/>
</dbReference>
<dbReference type="Pfam" id="PF05496">
    <property type="entry name" value="RuvB_N"/>
    <property type="match status" value="1"/>
</dbReference>
<dbReference type="SMART" id="SM00382">
    <property type="entry name" value="AAA"/>
    <property type="match status" value="1"/>
</dbReference>
<dbReference type="SUPFAM" id="SSF52540">
    <property type="entry name" value="P-loop containing nucleoside triphosphate hydrolases"/>
    <property type="match status" value="1"/>
</dbReference>
<dbReference type="SUPFAM" id="SSF46785">
    <property type="entry name" value="Winged helix' DNA-binding domain"/>
    <property type="match status" value="1"/>
</dbReference>
<feature type="chain" id="PRO_0000165603" description="Holliday junction branch migration complex subunit RuvB">
    <location>
        <begin position="1"/>
        <end position="332"/>
    </location>
</feature>
<feature type="region of interest" description="Large ATPase domain (RuvB-L)" evidence="1">
    <location>
        <begin position="1"/>
        <end position="181"/>
    </location>
</feature>
<feature type="region of interest" description="Small ATPAse domain (RuvB-S)" evidence="1">
    <location>
        <begin position="182"/>
        <end position="252"/>
    </location>
</feature>
<feature type="region of interest" description="Head domain (RuvB-H)" evidence="1">
    <location>
        <begin position="255"/>
        <end position="332"/>
    </location>
</feature>
<feature type="binding site" evidence="1">
    <location>
        <position position="20"/>
    </location>
    <ligand>
        <name>ATP</name>
        <dbReference type="ChEBI" id="CHEBI:30616"/>
    </ligand>
</feature>
<feature type="binding site" evidence="1">
    <location>
        <position position="21"/>
    </location>
    <ligand>
        <name>ATP</name>
        <dbReference type="ChEBI" id="CHEBI:30616"/>
    </ligand>
</feature>
<feature type="binding site" evidence="1">
    <location>
        <position position="62"/>
    </location>
    <ligand>
        <name>ATP</name>
        <dbReference type="ChEBI" id="CHEBI:30616"/>
    </ligand>
</feature>
<feature type="binding site" evidence="1">
    <location>
        <position position="65"/>
    </location>
    <ligand>
        <name>ATP</name>
        <dbReference type="ChEBI" id="CHEBI:30616"/>
    </ligand>
</feature>
<feature type="binding site" evidence="1">
    <location>
        <position position="66"/>
    </location>
    <ligand>
        <name>ATP</name>
        <dbReference type="ChEBI" id="CHEBI:30616"/>
    </ligand>
</feature>
<feature type="binding site" evidence="1">
    <location>
        <position position="66"/>
    </location>
    <ligand>
        <name>Mg(2+)</name>
        <dbReference type="ChEBI" id="CHEBI:18420"/>
    </ligand>
</feature>
<feature type="binding site" evidence="1">
    <location>
        <position position="67"/>
    </location>
    <ligand>
        <name>ATP</name>
        <dbReference type="ChEBI" id="CHEBI:30616"/>
    </ligand>
</feature>
<feature type="binding site" evidence="1">
    <location>
        <begin position="128"/>
        <end position="130"/>
    </location>
    <ligand>
        <name>ATP</name>
        <dbReference type="ChEBI" id="CHEBI:30616"/>
    </ligand>
</feature>
<feature type="binding site" evidence="1">
    <location>
        <position position="171"/>
    </location>
    <ligand>
        <name>ATP</name>
        <dbReference type="ChEBI" id="CHEBI:30616"/>
    </ligand>
</feature>
<feature type="binding site" evidence="1">
    <location>
        <position position="181"/>
    </location>
    <ligand>
        <name>ATP</name>
        <dbReference type="ChEBI" id="CHEBI:30616"/>
    </ligand>
</feature>
<feature type="binding site" evidence="1">
    <location>
        <position position="218"/>
    </location>
    <ligand>
        <name>ATP</name>
        <dbReference type="ChEBI" id="CHEBI:30616"/>
    </ligand>
</feature>
<feature type="binding site" evidence="1">
    <location>
        <position position="291"/>
    </location>
    <ligand>
        <name>DNA</name>
        <dbReference type="ChEBI" id="CHEBI:16991"/>
    </ligand>
</feature>
<feature type="binding site" evidence="1">
    <location>
        <position position="310"/>
    </location>
    <ligand>
        <name>DNA</name>
        <dbReference type="ChEBI" id="CHEBI:16991"/>
    </ligand>
</feature>
<feature type="binding site" evidence="1">
    <location>
        <position position="312"/>
    </location>
    <ligand>
        <name>DNA</name>
        <dbReference type="ChEBI" id="CHEBI:16991"/>
    </ligand>
</feature>
<feature type="binding site" evidence="1">
    <location>
        <position position="315"/>
    </location>
    <ligand>
        <name>DNA</name>
        <dbReference type="ChEBI" id="CHEBI:16991"/>
    </ligand>
</feature>